<name>RL5_BIFAA</name>
<comment type="function">
    <text evidence="1">This is one of the proteins that bind and probably mediate the attachment of the 5S RNA into the large ribosomal subunit, where it forms part of the central protuberance. In the 70S ribosome it contacts protein S13 of the 30S subunit (bridge B1b), connecting the 2 subunits; this bridge is implicated in subunit movement. Contacts the P site tRNA; the 5S rRNA and some of its associated proteins might help stabilize positioning of ribosome-bound tRNAs.</text>
</comment>
<comment type="subunit">
    <text evidence="1">Part of the 50S ribosomal subunit; part of the 5S rRNA/L5/L18/L25 subcomplex. Contacts the 5S rRNA and the P site tRNA. Forms a bridge to the 30S subunit in the 70S ribosome.</text>
</comment>
<comment type="similarity">
    <text evidence="1">Belongs to the universal ribosomal protein uL5 family.</text>
</comment>
<sequence>MTDTTVEAPATPRLKQKYNEQIVPELEKEFHYSNPMQVARVQKVVVSMGVGAAARDSKLIEGAVKDLTLITGQKPKITKAKKSVAQFHLREGQAIGAYVTLRGERMWEFLDRLLTMALPRIRDFRGINGDQFDGQGNYNFGLTEQSMFHEIDPDSIDHQRGMDITVVTSTKDDKEARVLLKHLGFPFKEN</sequence>
<proteinExistence type="inferred from homology"/>
<accession>A1A081</accession>
<gene>
    <name evidence="1" type="primary">rplE</name>
    <name type="ordered locus">BAD_0333</name>
</gene>
<dbReference type="EMBL" id="AP009256">
    <property type="protein sequence ID" value="BAF39114.1"/>
    <property type="molecule type" value="Genomic_DNA"/>
</dbReference>
<dbReference type="RefSeq" id="WP_003808042.1">
    <property type="nucleotide sequence ID" value="NC_008618.1"/>
</dbReference>
<dbReference type="SMR" id="A1A081"/>
<dbReference type="STRING" id="367928.BAD_0333"/>
<dbReference type="PaxDb" id="1680-BADO_0340"/>
<dbReference type="GeneID" id="4556674"/>
<dbReference type="KEGG" id="bad:BAD_0333"/>
<dbReference type="HOGENOM" id="CLU_061015_2_1_11"/>
<dbReference type="Proteomes" id="UP000008702">
    <property type="component" value="Chromosome"/>
</dbReference>
<dbReference type="GO" id="GO:1990904">
    <property type="term" value="C:ribonucleoprotein complex"/>
    <property type="evidence" value="ECO:0007669"/>
    <property type="project" value="UniProtKB-KW"/>
</dbReference>
<dbReference type="GO" id="GO:0005840">
    <property type="term" value="C:ribosome"/>
    <property type="evidence" value="ECO:0007669"/>
    <property type="project" value="UniProtKB-KW"/>
</dbReference>
<dbReference type="GO" id="GO:0019843">
    <property type="term" value="F:rRNA binding"/>
    <property type="evidence" value="ECO:0007669"/>
    <property type="project" value="UniProtKB-UniRule"/>
</dbReference>
<dbReference type="GO" id="GO:0003735">
    <property type="term" value="F:structural constituent of ribosome"/>
    <property type="evidence" value="ECO:0007669"/>
    <property type="project" value="InterPro"/>
</dbReference>
<dbReference type="GO" id="GO:0000049">
    <property type="term" value="F:tRNA binding"/>
    <property type="evidence" value="ECO:0007669"/>
    <property type="project" value="UniProtKB-UniRule"/>
</dbReference>
<dbReference type="GO" id="GO:0006412">
    <property type="term" value="P:translation"/>
    <property type="evidence" value="ECO:0007669"/>
    <property type="project" value="UniProtKB-UniRule"/>
</dbReference>
<dbReference type="FunFam" id="3.30.1440.10:FF:000001">
    <property type="entry name" value="50S ribosomal protein L5"/>
    <property type="match status" value="1"/>
</dbReference>
<dbReference type="Gene3D" id="3.30.1440.10">
    <property type="match status" value="1"/>
</dbReference>
<dbReference type="HAMAP" id="MF_01333_B">
    <property type="entry name" value="Ribosomal_uL5_B"/>
    <property type="match status" value="1"/>
</dbReference>
<dbReference type="InterPro" id="IPR002132">
    <property type="entry name" value="Ribosomal_uL5"/>
</dbReference>
<dbReference type="InterPro" id="IPR020930">
    <property type="entry name" value="Ribosomal_uL5_bac-type"/>
</dbReference>
<dbReference type="InterPro" id="IPR031309">
    <property type="entry name" value="Ribosomal_uL5_C"/>
</dbReference>
<dbReference type="InterPro" id="IPR022803">
    <property type="entry name" value="Ribosomal_uL5_dom_sf"/>
</dbReference>
<dbReference type="InterPro" id="IPR031310">
    <property type="entry name" value="Ribosomal_uL5_N"/>
</dbReference>
<dbReference type="NCBIfam" id="NF000585">
    <property type="entry name" value="PRK00010.1"/>
    <property type="match status" value="1"/>
</dbReference>
<dbReference type="PANTHER" id="PTHR11994">
    <property type="entry name" value="60S RIBOSOMAL PROTEIN L11-RELATED"/>
    <property type="match status" value="1"/>
</dbReference>
<dbReference type="Pfam" id="PF00281">
    <property type="entry name" value="Ribosomal_L5"/>
    <property type="match status" value="1"/>
</dbReference>
<dbReference type="Pfam" id="PF00673">
    <property type="entry name" value="Ribosomal_L5_C"/>
    <property type="match status" value="1"/>
</dbReference>
<dbReference type="PIRSF" id="PIRSF002161">
    <property type="entry name" value="Ribosomal_L5"/>
    <property type="match status" value="1"/>
</dbReference>
<dbReference type="SUPFAM" id="SSF55282">
    <property type="entry name" value="RL5-like"/>
    <property type="match status" value="1"/>
</dbReference>
<evidence type="ECO:0000255" key="1">
    <source>
        <dbReference type="HAMAP-Rule" id="MF_01333"/>
    </source>
</evidence>
<evidence type="ECO:0000305" key="2"/>
<organism>
    <name type="scientific">Bifidobacterium adolescentis (strain ATCC 15703 / DSM 20083 / NCTC 11814 / E194a)</name>
    <dbReference type="NCBI Taxonomy" id="367928"/>
    <lineage>
        <taxon>Bacteria</taxon>
        <taxon>Bacillati</taxon>
        <taxon>Actinomycetota</taxon>
        <taxon>Actinomycetes</taxon>
        <taxon>Bifidobacteriales</taxon>
        <taxon>Bifidobacteriaceae</taxon>
        <taxon>Bifidobacterium</taxon>
    </lineage>
</organism>
<protein>
    <recommendedName>
        <fullName evidence="1">Large ribosomal subunit protein uL5</fullName>
    </recommendedName>
    <alternativeName>
        <fullName evidence="2">50S ribosomal protein L5</fullName>
    </alternativeName>
</protein>
<feature type="chain" id="PRO_1000052695" description="Large ribosomal subunit protein uL5">
    <location>
        <begin position="1"/>
        <end position="190"/>
    </location>
</feature>
<keyword id="KW-1185">Reference proteome</keyword>
<keyword id="KW-0687">Ribonucleoprotein</keyword>
<keyword id="KW-0689">Ribosomal protein</keyword>
<keyword id="KW-0694">RNA-binding</keyword>
<keyword id="KW-0699">rRNA-binding</keyword>
<keyword id="KW-0820">tRNA-binding</keyword>
<reference key="1">
    <citation type="submission" date="2006-12" db="EMBL/GenBank/DDBJ databases">
        <title>Bifidobacterium adolescentis complete genome sequence.</title>
        <authorList>
            <person name="Suzuki T."/>
            <person name="Tsuda Y."/>
            <person name="Kanou N."/>
            <person name="Inoue T."/>
            <person name="Kumazaki K."/>
            <person name="Nagano S."/>
            <person name="Hirai S."/>
            <person name="Tanaka K."/>
            <person name="Watanabe K."/>
        </authorList>
    </citation>
    <scope>NUCLEOTIDE SEQUENCE [LARGE SCALE GENOMIC DNA]</scope>
    <source>
        <strain>ATCC 15703 / DSM 20083 / NCTC 11814 / E194a</strain>
    </source>
</reference>